<name>PLSY_PROM0</name>
<proteinExistence type="inferred from homology"/>
<organism>
    <name type="scientific">Prochlorococcus marinus (strain MIT 9301)</name>
    <dbReference type="NCBI Taxonomy" id="167546"/>
    <lineage>
        <taxon>Bacteria</taxon>
        <taxon>Bacillati</taxon>
        <taxon>Cyanobacteriota</taxon>
        <taxon>Cyanophyceae</taxon>
        <taxon>Synechococcales</taxon>
        <taxon>Prochlorococcaceae</taxon>
        <taxon>Prochlorococcus</taxon>
    </lineage>
</organism>
<evidence type="ECO:0000255" key="1">
    <source>
        <dbReference type="HAMAP-Rule" id="MF_01043"/>
    </source>
</evidence>
<dbReference type="EC" id="2.3.1.275" evidence="1"/>
<dbReference type="EMBL" id="CP000576">
    <property type="protein sequence ID" value="ABO18136.1"/>
    <property type="molecule type" value="Genomic_DNA"/>
</dbReference>
<dbReference type="RefSeq" id="WP_011863441.1">
    <property type="nucleotide sequence ID" value="NC_009091.1"/>
</dbReference>
<dbReference type="SMR" id="A3PEG1"/>
<dbReference type="STRING" id="167546.P9301_15131"/>
<dbReference type="KEGG" id="pmg:P9301_15131"/>
<dbReference type="eggNOG" id="COG0344">
    <property type="taxonomic scope" value="Bacteria"/>
</dbReference>
<dbReference type="HOGENOM" id="CLU_081254_7_1_3"/>
<dbReference type="OrthoDB" id="9777124at2"/>
<dbReference type="UniPathway" id="UPA00085"/>
<dbReference type="Proteomes" id="UP000001430">
    <property type="component" value="Chromosome"/>
</dbReference>
<dbReference type="GO" id="GO:0005886">
    <property type="term" value="C:plasma membrane"/>
    <property type="evidence" value="ECO:0007669"/>
    <property type="project" value="UniProtKB-SubCell"/>
</dbReference>
<dbReference type="GO" id="GO:0043772">
    <property type="term" value="F:acyl-phosphate glycerol-3-phosphate acyltransferase activity"/>
    <property type="evidence" value="ECO:0007669"/>
    <property type="project" value="UniProtKB-UniRule"/>
</dbReference>
<dbReference type="GO" id="GO:0008654">
    <property type="term" value="P:phospholipid biosynthetic process"/>
    <property type="evidence" value="ECO:0007669"/>
    <property type="project" value="UniProtKB-UniRule"/>
</dbReference>
<dbReference type="HAMAP" id="MF_01043">
    <property type="entry name" value="PlsY"/>
    <property type="match status" value="1"/>
</dbReference>
<dbReference type="InterPro" id="IPR003811">
    <property type="entry name" value="G3P_acylTferase_PlsY"/>
</dbReference>
<dbReference type="NCBIfam" id="TIGR00023">
    <property type="entry name" value="glycerol-3-phosphate 1-O-acyltransferase PlsY"/>
    <property type="match status" value="1"/>
</dbReference>
<dbReference type="PANTHER" id="PTHR30309:SF0">
    <property type="entry name" value="GLYCEROL-3-PHOSPHATE ACYLTRANSFERASE-RELATED"/>
    <property type="match status" value="1"/>
</dbReference>
<dbReference type="PANTHER" id="PTHR30309">
    <property type="entry name" value="INNER MEMBRANE PROTEIN YGIH"/>
    <property type="match status" value="1"/>
</dbReference>
<dbReference type="Pfam" id="PF02660">
    <property type="entry name" value="G3P_acyltransf"/>
    <property type="match status" value="1"/>
</dbReference>
<dbReference type="SMART" id="SM01207">
    <property type="entry name" value="G3P_acyltransf"/>
    <property type="match status" value="1"/>
</dbReference>
<sequence>MNILIIFASYLLGSLPTGFLIGKYLKNIDLRTIGSGSTGATNVLRNVGKWPALFVFIIDLGKGLIAVKIAQYYTDQGLIEVIAGISAISGHIWPIWLRGKGGKAVATGLGMFLALSWKVGLASLGFFLIVLTKTKYVSLSSISAAILLPIFMFFYLGKFMHSYFFISLIVALLVIWKHRTNITRLLKGEESKINQTQ</sequence>
<accession>A3PEG1</accession>
<comment type="function">
    <text evidence="1">Catalyzes the transfer of an acyl group from acyl-phosphate (acyl-PO(4)) to glycerol-3-phosphate (G3P) to form lysophosphatidic acid (LPA). This enzyme utilizes acyl-phosphate as fatty acyl donor, but not acyl-CoA or acyl-ACP.</text>
</comment>
<comment type="catalytic activity">
    <reaction evidence="1">
        <text>an acyl phosphate + sn-glycerol 3-phosphate = a 1-acyl-sn-glycero-3-phosphate + phosphate</text>
        <dbReference type="Rhea" id="RHEA:34075"/>
        <dbReference type="ChEBI" id="CHEBI:43474"/>
        <dbReference type="ChEBI" id="CHEBI:57597"/>
        <dbReference type="ChEBI" id="CHEBI:57970"/>
        <dbReference type="ChEBI" id="CHEBI:59918"/>
        <dbReference type="EC" id="2.3.1.275"/>
    </reaction>
</comment>
<comment type="pathway">
    <text evidence="1">Lipid metabolism; phospholipid metabolism.</text>
</comment>
<comment type="subunit">
    <text evidence="1">Probably interacts with PlsX.</text>
</comment>
<comment type="subcellular location">
    <subcellularLocation>
        <location evidence="1">Cell inner membrane</location>
        <topology evidence="1">Multi-pass membrane protein</topology>
    </subcellularLocation>
</comment>
<comment type="similarity">
    <text evidence="1">Belongs to the PlsY family.</text>
</comment>
<gene>
    <name evidence="1" type="primary">plsY</name>
    <name type="ordered locus">P9301_15131</name>
</gene>
<keyword id="KW-0997">Cell inner membrane</keyword>
<keyword id="KW-1003">Cell membrane</keyword>
<keyword id="KW-0444">Lipid biosynthesis</keyword>
<keyword id="KW-0443">Lipid metabolism</keyword>
<keyword id="KW-0472">Membrane</keyword>
<keyword id="KW-0594">Phospholipid biosynthesis</keyword>
<keyword id="KW-1208">Phospholipid metabolism</keyword>
<keyword id="KW-1185">Reference proteome</keyword>
<keyword id="KW-0808">Transferase</keyword>
<keyword id="KW-0812">Transmembrane</keyword>
<keyword id="KW-1133">Transmembrane helix</keyword>
<protein>
    <recommendedName>
        <fullName evidence="1">Glycerol-3-phosphate acyltransferase</fullName>
    </recommendedName>
    <alternativeName>
        <fullName evidence="1">Acyl-PO4 G3P acyltransferase</fullName>
    </alternativeName>
    <alternativeName>
        <fullName evidence="1">Acyl-phosphate--glycerol-3-phosphate acyltransferase</fullName>
    </alternativeName>
    <alternativeName>
        <fullName evidence="1">G3P acyltransferase</fullName>
        <shortName evidence="1">GPAT</shortName>
        <ecNumber evidence="1">2.3.1.275</ecNumber>
    </alternativeName>
    <alternativeName>
        <fullName evidence="1">Lysophosphatidic acid synthase</fullName>
        <shortName evidence="1">LPA synthase</shortName>
    </alternativeName>
</protein>
<reference key="1">
    <citation type="journal article" date="2007" name="PLoS Genet.">
        <title>Patterns and implications of gene gain and loss in the evolution of Prochlorococcus.</title>
        <authorList>
            <person name="Kettler G.C."/>
            <person name="Martiny A.C."/>
            <person name="Huang K."/>
            <person name="Zucker J."/>
            <person name="Coleman M.L."/>
            <person name="Rodrigue S."/>
            <person name="Chen F."/>
            <person name="Lapidus A."/>
            <person name="Ferriera S."/>
            <person name="Johnson J."/>
            <person name="Steglich C."/>
            <person name="Church G.M."/>
            <person name="Richardson P."/>
            <person name="Chisholm S.W."/>
        </authorList>
    </citation>
    <scope>NUCLEOTIDE SEQUENCE [LARGE SCALE GENOMIC DNA]</scope>
    <source>
        <strain>MIT 9301</strain>
    </source>
</reference>
<feature type="chain" id="PRO_1000064202" description="Glycerol-3-phosphate acyltransferase">
    <location>
        <begin position="1"/>
        <end position="197"/>
    </location>
</feature>
<feature type="transmembrane region" description="Helical" evidence="1">
    <location>
        <begin position="1"/>
        <end position="21"/>
    </location>
</feature>
<feature type="transmembrane region" description="Helical" evidence="1">
    <location>
        <begin position="50"/>
        <end position="70"/>
    </location>
</feature>
<feature type="transmembrane region" description="Helical" evidence="1">
    <location>
        <begin position="77"/>
        <end position="97"/>
    </location>
</feature>
<feature type="transmembrane region" description="Helical" evidence="1">
    <location>
        <begin position="111"/>
        <end position="131"/>
    </location>
</feature>
<feature type="transmembrane region" description="Helical" evidence="1">
    <location>
        <begin position="137"/>
        <end position="157"/>
    </location>
</feature>
<feature type="transmembrane region" description="Helical" evidence="1">
    <location>
        <begin position="158"/>
        <end position="178"/>
    </location>
</feature>